<keyword id="KW-0963">Cytoplasm</keyword>
<keyword id="KW-0240">DNA-directed RNA polymerase</keyword>
<keyword id="KW-0539">Nucleus</keyword>
<keyword id="KW-0597">Phosphoprotein</keyword>
<keyword id="KW-0804">Transcription</keyword>
<organism>
    <name type="scientific">Saccharomyces cerevisiae (strain YJM789)</name>
    <name type="common">Baker's yeast</name>
    <dbReference type="NCBI Taxonomy" id="307796"/>
    <lineage>
        <taxon>Eukaryota</taxon>
        <taxon>Fungi</taxon>
        <taxon>Dikarya</taxon>
        <taxon>Ascomycota</taxon>
        <taxon>Saccharomycotina</taxon>
        <taxon>Saccharomycetes</taxon>
        <taxon>Saccharomycetales</taxon>
        <taxon>Saccharomycetaceae</taxon>
        <taxon>Saccharomyces</taxon>
    </lineage>
</organism>
<feature type="chain" id="PRO_0000351043" description="DNA-directed RNA polymerase III subunit RPC3">
    <location>
        <begin position="1"/>
        <end position="654"/>
    </location>
</feature>
<feature type="region of interest" description="Disordered" evidence="3">
    <location>
        <begin position="381"/>
        <end position="401"/>
    </location>
</feature>
<feature type="region of interest" description="Disordered" evidence="3">
    <location>
        <begin position="422"/>
        <end position="448"/>
    </location>
</feature>
<feature type="region of interest" description="Leucine-zipper">
    <location>
        <begin position="581"/>
        <end position="602"/>
    </location>
</feature>
<feature type="compositionally biased region" description="Acidic residues" evidence="3">
    <location>
        <begin position="429"/>
        <end position="444"/>
    </location>
</feature>
<feature type="modified residue" description="Phosphothreonine" evidence="2">
    <location>
        <position position="27"/>
    </location>
</feature>
<feature type="modified residue" description="Phosphoserine" evidence="2">
    <location>
        <position position="392"/>
    </location>
</feature>
<feature type="modified residue" description="Phosphoserine" evidence="2">
    <location>
        <position position="394"/>
    </location>
</feature>
<gene>
    <name type="primary">RPC82</name>
    <name type="synonym">RPC3</name>
    <name type="ORF">SCY_5891</name>
</gene>
<proteinExistence type="inferred from homology"/>
<protein>
    <recommendedName>
        <fullName>DNA-directed RNA polymerase III subunit RPC3</fullName>
        <shortName>RNA polymerase III subunit C3</shortName>
    </recommendedName>
    <alternativeName>
        <fullName>C82</fullName>
    </alternativeName>
    <alternativeName>
        <fullName>DNA-directed III 74 kDa polypeptide</fullName>
        <shortName>C74</shortName>
    </alternativeName>
</protein>
<sequence length="654" mass="73987">MDELLGEALSAENQAGESTVESEKLVTPEDVMTISSLEQRTLNPDLFLYKELVKAHLGERAASVIGMLVALGRLSVRELVEKIDGMDVDSVKTTLVSLTQLRCVKYLQETAISGKKTTYYYYNEEGIHILLYSGLIIDEIITQMRVNDEEEHKQLVAEIVQNVISLGSLTVEDYLSSVTSDSMKYTISSLFVQLCEMGYLIQISKLHYTPIEDLWQFLYEKHYKNIPRNSPLSDLKKRSQAKMNAKTDFAKIINKPNELSQILTVDPKTSLRIVKPTVSLTINLDRFMKGRRSKQLINLAKTRVGSVTAQVYKIALRLTEQKSPKIRDPLTQTGLLQDLEEAKSFQDEAELVEEKTPGLTFNAIDLARHLPAELDLRGSLLSRKPSDNKKRSGSNAAASLPSKKLKTEDGFVIPALPAAVSKSLQESGDTQEEDEEEEDLDADTEDPHSASLINSHLKILASSNFPFLNETKPGVYYVPYSKLMPVLKSSVYEYVIASTLGPSAMRLSRCIRDNKLVSEKIINSTALMKEKDIRSTLASLIRYNSVEIQEVPRTADRSASRAVFLFRCKETHSYNFMRQNLEWNMANLLFKKEKLKQENSTLLKKANRDDVKGRENELLLPSELNQLKMVNERELNVFARLSRLLSLWEVFQMA</sequence>
<evidence type="ECO:0000250" key="1"/>
<evidence type="ECO:0000250" key="2">
    <source>
        <dbReference type="UniProtKB" id="P32349"/>
    </source>
</evidence>
<evidence type="ECO:0000256" key="3">
    <source>
        <dbReference type="SAM" id="MobiDB-lite"/>
    </source>
</evidence>
<evidence type="ECO:0000305" key="4"/>
<reference key="1">
    <citation type="journal article" date="2007" name="Proc. Natl. Acad. Sci. U.S.A.">
        <title>Genome sequencing and comparative analysis of Saccharomyces cerevisiae strain YJM789.</title>
        <authorList>
            <person name="Wei W."/>
            <person name="McCusker J.H."/>
            <person name="Hyman R.W."/>
            <person name="Jones T."/>
            <person name="Ning Y."/>
            <person name="Cao Z."/>
            <person name="Gu Z."/>
            <person name="Bruno D."/>
            <person name="Miranda M."/>
            <person name="Nguyen M."/>
            <person name="Wilhelmy J."/>
            <person name="Komp C."/>
            <person name="Tamse R."/>
            <person name="Wang X."/>
            <person name="Jia P."/>
            <person name="Luedi P."/>
            <person name="Oefner P.J."/>
            <person name="David L."/>
            <person name="Dietrich F.S."/>
            <person name="Li Y."/>
            <person name="Davis R.W."/>
            <person name="Steinmetz L.M."/>
        </authorList>
    </citation>
    <scope>NUCLEOTIDE SEQUENCE [LARGE SCALE GENOMIC DNA]</scope>
    <source>
        <strain>YJM789</strain>
    </source>
</reference>
<name>RPC3_YEAS7</name>
<accession>A6ZX64</accession>
<comment type="function">
    <text evidence="1">DNA-dependent RNA polymerase catalyzes the transcription of DNA into RNA using the four ribonucleoside triphosphates as substrates. Specific core component of RNA polymerase III which synthesizes small RNAs, such as 5S rRNA and tRNAs (By similarity).</text>
</comment>
<comment type="subunit">
    <text evidence="1">Component of the RNA polymerase III (Pol III) complex consisting of 17 subunits.</text>
</comment>
<comment type="subcellular location">
    <subcellularLocation>
        <location evidence="1">Cytoplasm</location>
    </subcellularLocation>
    <subcellularLocation>
        <location evidence="1">Nucleus</location>
    </subcellularLocation>
</comment>
<comment type="similarity">
    <text evidence="4">Belongs to the RNA polymerase beta chain family.</text>
</comment>
<dbReference type="EMBL" id="AAFW02000135">
    <property type="protein sequence ID" value="EDN61306.1"/>
    <property type="molecule type" value="Genomic_DNA"/>
</dbReference>
<dbReference type="SMR" id="A6ZX64"/>
<dbReference type="HOGENOM" id="CLU_010734_0_0_1"/>
<dbReference type="Proteomes" id="UP000007060">
    <property type="component" value="Unassembled WGS sequence"/>
</dbReference>
<dbReference type="GO" id="GO:0005737">
    <property type="term" value="C:cytoplasm"/>
    <property type="evidence" value="ECO:0007669"/>
    <property type="project" value="UniProtKB-SubCell"/>
</dbReference>
<dbReference type="GO" id="GO:0005666">
    <property type="term" value="C:RNA polymerase III complex"/>
    <property type="evidence" value="ECO:0007669"/>
    <property type="project" value="InterPro"/>
</dbReference>
<dbReference type="GO" id="GO:0003697">
    <property type="term" value="F:single-stranded DNA binding"/>
    <property type="evidence" value="ECO:0007669"/>
    <property type="project" value="InterPro"/>
</dbReference>
<dbReference type="GO" id="GO:0006351">
    <property type="term" value="P:DNA-templated transcription"/>
    <property type="evidence" value="ECO:0007669"/>
    <property type="project" value="InterPro"/>
</dbReference>
<dbReference type="FunFam" id="1.10.10.10:FF:000694">
    <property type="entry name" value="DNA-directed RNA polymerase III subunit RPC3"/>
    <property type="match status" value="1"/>
</dbReference>
<dbReference type="FunFam" id="1.10.10.10:FF:000695">
    <property type="entry name" value="DNA-directed RNA polymerase III subunit RPC3"/>
    <property type="match status" value="1"/>
</dbReference>
<dbReference type="Gene3D" id="1.10.10.10">
    <property type="entry name" value="Winged helix-like DNA-binding domain superfamily/Winged helix DNA-binding domain"/>
    <property type="match status" value="2"/>
</dbReference>
<dbReference type="InterPro" id="IPR055207">
    <property type="entry name" value="POLR3C_WHD"/>
</dbReference>
<dbReference type="InterPro" id="IPR013197">
    <property type="entry name" value="RNA_pol_III_RPC82-rel_HTH"/>
</dbReference>
<dbReference type="InterPro" id="IPR008806">
    <property type="entry name" value="RNA_pol_III_Rpc82_C"/>
</dbReference>
<dbReference type="InterPro" id="IPR039748">
    <property type="entry name" value="RPC3"/>
</dbReference>
<dbReference type="InterPro" id="IPR036388">
    <property type="entry name" value="WH-like_DNA-bd_sf"/>
</dbReference>
<dbReference type="PANTHER" id="PTHR12949:SF0">
    <property type="entry name" value="DNA-DIRECTED RNA POLYMERASE III SUBUNIT RPC3"/>
    <property type="match status" value="1"/>
</dbReference>
<dbReference type="PANTHER" id="PTHR12949">
    <property type="entry name" value="RNA POLYMERASE III DNA DIRECTED -RELATED"/>
    <property type="match status" value="1"/>
</dbReference>
<dbReference type="Pfam" id="PF08221">
    <property type="entry name" value="HTH_9"/>
    <property type="match status" value="1"/>
</dbReference>
<dbReference type="Pfam" id="PF22536">
    <property type="entry name" value="POLR3C_WHD"/>
    <property type="match status" value="1"/>
</dbReference>
<dbReference type="Pfam" id="PF05645">
    <property type="entry name" value="RNA_pol_Rpc82"/>
    <property type="match status" value="1"/>
</dbReference>
<dbReference type="Pfam" id="PF20912">
    <property type="entry name" value="RPC3_helical"/>
    <property type="match status" value="1"/>
</dbReference>